<reference key="1">
    <citation type="journal article" date="2009" name="PLoS Genet.">
        <title>Organised genome dynamics in the Escherichia coli species results in highly diverse adaptive paths.</title>
        <authorList>
            <person name="Touchon M."/>
            <person name="Hoede C."/>
            <person name="Tenaillon O."/>
            <person name="Barbe V."/>
            <person name="Baeriswyl S."/>
            <person name="Bidet P."/>
            <person name="Bingen E."/>
            <person name="Bonacorsi S."/>
            <person name="Bouchier C."/>
            <person name="Bouvet O."/>
            <person name="Calteau A."/>
            <person name="Chiapello H."/>
            <person name="Clermont O."/>
            <person name="Cruveiller S."/>
            <person name="Danchin A."/>
            <person name="Diard M."/>
            <person name="Dossat C."/>
            <person name="Karoui M.E."/>
            <person name="Frapy E."/>
            <person name="Garry L."/>
            <person name="Ghigo J.M."/>
            <person name="Gilles A.M."/>
            <person name="Johnson J."/>
            <person name="Le Bouguenec C."/>
            <person name="Lescat M."/>
            <person name="Mangenot S."/>
            <person name="Martinez-Jehanne V."/>
            <person name="Matic I."/>
            <person name="Nassif X."/>
            <person name="Oztas S."/>
            <person name="Petit M.A."/>
            <person name="Pichon C."/>
            <person name="Rouy Z."/>
            <person name="Ruf C.S."/>
            <person name="Schneider D."/>
            <person name="Tourret J."/>
            <person name="Vacherie B."/>
            <person name="Vallenet D."/>
            <person name="Medigue C."/>
            <person name="Rocha E.P.C."/>
            <person name="Denamur E."/>
        </authorList>
    </citation>
    <scope>NUCLEOTIDE SEQUENCE [LARGE SCALE GENOMIC DNA]</scope>
    <source>
        <strain>S88 / ExPEC</strain>
    </source>
</reference>
<dbReference type="EMBL" id="CU928161">
    <property type="protein sequence ID" value="CAR01565.1"/>
    <property type="molecule type" value="Genomic_DNA"/>
</dbReference>
<dbReference type="RefSeq" id="WP_000417059.1">
    <property type="nucleotide sequence ID" value="NC_011742.1"/>
</dbReference>
<dbReference type="SMR" id="B7MBH1"/>
<dbReference type="KEGG" id="ecz:ECS88_0201"/>
<dbReference type="HOGENOM" id="CLU_190008_0_0_6"/>
<dbReference type="Proteomes" id="UP000000747">
    <property type="component" value="Chromosome"/>
</dbReference>
<dbReference type="HAMAP" id="MF_01064">
    <property type="entry name" value="UPF0253"/>
    <property type="match status" value="1"/>
</dbReference>
<dbReference type="InterPro" id="IPR009624">
    <property type="entry name" value="UPF0253"/>
</dbReference>
<dbReference type="NCBIfam" id="NF003436">
    <property type="entry name" value="PRK04964.1"/>
    <property type="match status" value="1"/>
</dbReference>
<dbReference type="Pfam" id="PF06786">
    <property type="entry name" value="UPF0253"/>
    <property type="match status" value="1"/>
</dbReference>
<organism>
    <name type="scientific">Escherichia coli O45:K1 (strain S88 / ExPEC)</name>
    <dbReference type="NCBI Taxonomy" id="585035"/>
    <lineage>
        <taxon>Bacteria</taxon>
        <taxon>Pseudomonadati</taxon>
        <taxon>Pseudomonadota</taxon>
        <taxon>Gammaproteobacteria</taxon>
        <taxon>Enterobacterales</taxon>
        <taxon>Enterobacteriaceae</taxon>
        <taxon>Escherichia</taxon>
    </lineage>
</organism>
<accession>B7MBH1</accession>
<gene>
    <name evidence="1" type="primary">yaeP</name>
    <name type="ordered locus">ECS88_0201</name>
</gene>
<keyword id="KW-1185">Reference proteome</keyword>
<sequence>MEKYCELIRKRYAEIASGDLGYVPDALGCVLKVLNEMAADDALSEAVREKAAYAAANLLVSDYVNK</sequence>
<name>YAEP_ECO45</name>
<comment type="similarity">
    <text evidence="1">Belongs to the UPF0253 family.</text>
</comment>
<evidence type="ECO:0000255" key="1">
    <source>
        <dbReference type="HAMAP-Rule" id="MF_01064"/>
    </source>
</evidence>
<protein>
    <recommendedName>
        <fullName evidence="1">UPF0253 protein YaeP</fullName>
    </recommendedName>
</protein>
<proteinExistence type="inferred from homology"/>
<feature type="chain" id="PRO_1000136532" description="UPF0253 protein YaeP">
    <location>
        <begin position="1"/>
        <end position="66"/>
    </location>
</feature>